<dbReference type="EMBL" id="AM942759">
    <property type="protein sequence ID" value="CAR45941.1"/>
    <property type="molecule type" value="Genomic_DNA"/>
</dbReference>
<dbReference type="RefSeq" id="WP_004246652.1">
    <property type="nucleotide sequence ID" value="NC_010554.1"/>
</dbReference>
<dbReference type="SMR" id="B4F026"/>
<dbReference type="EnsemblBacteria" id="CAR45941">
    <property type="protein sequence ID" value="CAR45941"/>
    <property type="gene ID" value="PMI3016"/>
</dbReference>
<dbReference type="GeneID" id="6800066"/>
<dbReference type="KEGG" id="pmr:PMI3016"/>
<dbReference type="eggNOG" id="COG1281">
    <property type="taxonomic scope" value="Bacteria"/>
</dbReference>
<dbReference type="HOGENOM" id="CLU_054493_0_0_6"/>
<dbReference type="Proteomes" id="UP000008319">
    <property type="component" value="Chromosome"/>
</dbReference>
<dbReference type="GO" id="GO:0005737">
    <property type="term" value="C:cytoplasm"/>
    <property type="evidence" value="ECO:0007669"/>
    <property type="project" value="UniProtKB-SubCell"/>
</dbReference>
<dbReference type="GO" id="GO:0044183">
    <property type="term" value="F:protein folding chaperone"/>
    <property type="evidence" value="ECO:0007669"/>
    <property type="project" value="TreeGrafter"/>
</dbReference>
<dbReference type="GO" id="GO:0051082">
    <property type="term" value="F:unfolded protein binding"/>
    <property type="evidence" value="ECO:0007669"/>
    <property type="project" value="UniProtKB-UniRule"/>
</dbReference>
<dbReference type="GO" id="GO:0042026">
    <property type="term" value="P:protein refolding"/>
    <property type="evidence" value="ECO:0007669"/>
    <property type="project" value="TreeGrafter"/>
</dbReference>
<dbReference type="CDD" id="cd00498">
    <property type="entry name" value="Hsp33"/>
    <property type="match status" value="1"/>
</dbReference>
<dbReference type="Gene3D" id="1.10.287.480">
    <property type="entry name" value="helix hairpin bin"/>
    <property type="match status" value="1"/>
</dbReference>
<dbReference type="Gene3D" id="3.55.30.10">
    <property type="entry name" value="Hsp33 domain"/>
    <property type="match status" value="1"/>
</dbReference>
<dbReference type="Gene3D" id="3.90.1280.10">
    <property type="entry name" value="HSP33 redox switch-like"/>
    <property type="match status" value="1"/>
</dbReference>
<dbReference type="HAMAP" id="MF_00117">
    <property type="entry name" value="HslO"/>
    <property type="match status" value="1"/>
</dbReference>
<dbReference type="InterPro" id="IPR000397">
    <property type="entry name" value="Heat_shock_Hsp33"/>
</dbReference>
<dbReference type="InterPro" id="IPR016154">
    <property type="entry name" value="Heat_shock_Hsp33_C"/>
</dbReference>
<dbReference type="InterPro" id="IPR016153">
    <property type="entry name" value="Heat_shock_Hsp33_N"/>
</dbReference>
<dbReference type="InterPro" id="IPR023212">
    <property type="entry name" value="Hsp33_helix_hairpin_bin_dom_sf"/>
</dbReference>
<dbReference type="NCBIfam" id="NF001033">
    <property type="entry name" value="PRK00114.1"/>
    <property type="match status" value="1"/>
</dbReference>
<dbReference type="PANTHER" id="PTHR30111">
    <property type="entry name" value="33 KDA CHAPERONIN"/>
    <property type="match status" value="1"/>
</dbReference>
<dbReference type="PANTHER" id="PTHR30111:SF1">
    <property type="entry name" value="33 KDA CHAPERONIN"/>
    <property type="match status" value="1"/>
</dbReference>
<dbReference type="Pfam" id="PF01430">
    <property type="entry name" value="HSP33"/>
    <property type="match status" value="1"/>
</dbReference>
<dbReference type="PIRSF" id="PIRSF005261">
    <property type="entry name" value="Heat_shock_Hsp33"/>
    <property type="match status" value="1"/>
</dbReference>
<dbReference type="SUPFAM" id="SSF64397">
    <property type="entry name" value="Hsp33 domain"/>
    <property type="match status" value="1"/>
</dbReference>
<dbReference type="SUPFAM" id="SSF118352">
    <property type="entry name" value="HSP33 redox switch-like"/>
    <property type="match status" value="1"/>
</dbReference>
<protein>
    <recommendedName>
        <fullName evidence="1">33 kDa chaperonin</fullName>
    </recommendedName>
    <alternativeName>
        <fullName evidence="1">Heat shock protein 33 homolog</fullName>
        <shortName evidence="1">HSP33</shortName>
    </alternativeName>
</protein>
<proteinExistence type="inferred from homology"/>
<keyword id="KW-0143">Chaperone</keyword>
<keyword id="KW-0963">Cytoplasm</keyword>
<keyword id="KW-1015">Disulfide bond</keyword>
<keyword id="KW-0676">Redox-active center</keyword>
<keyword id="KW-1185">Reference proteome</keyword>
<keyword id="KW-0862">Zinc</keyword>
<comment type="function">
    <text evidence="1">Redox regulated molecular chaperone. Protects both thermally unfolding and oxidatively damaged proteins from irreversible aggregation. Plays an important role in the bacterial defense system toward oxidative stress.</text>
</comment>
<comment type="subcellular location">
    <subcellularLocation>
        <location evidence="1">Cytoplasm</location>
    </subcellularLocation>
</comment>
<comment type="PTM">
    <text evidence="1">Under oxidizing conditions two disulfide bonds are formed involving the reactive cysteines. Under reducing conditions zinc is bound to the reactive cysteines and the protein is inactive.</text>
</comment>
<comment type="similarity">
    <text evidence="1">Belongs to the HSP33 family.</text>
</comment>
<organism>
    <name type="scientific">Proteus mirabilis (strain HI4320)</name>
    <dbReference type="NCBI Taxonomy" id="529507"/>
    <lineage>
        <taxon>Bacteria</taxon>
        <taxon>Pseudomonadati</taxon>
        <taxon>Pseudomonadota</taxon>
        <taxon>Gammaproteobacteria</taxon>
        <taxon>Enterobacterales</taxon>
        <taxon>Morganellaceae</taxon>
        <taxon>Proteus</taxon>
    </lineage>
</organism>
<reference key="1">
    <citation type="journal article" date="2008" name="J. Bacteriol.">
        <title>Complete genome sequence of uropathogenic Proteus mirabilis, a master of both adherence and motility.</title>
        <authorList>
            <person name="Pearson M.M."/>
            <person name="Sebaihia M."/>
            <person name="Churcher C."/>
            <person name="Quail M.A."/>
            <person name="Seshasayee A.S."/>
            <person name="Luscombe N.M."/>
            <person name="Abdellah Z."/>
            <person name="Arrosmith C."/>
            <person name="Atkin B."/>
            <person name="Chillingworth T."/>
            <person name="Hauser H."/>
            <person name="Jagels K."/>
            <person name="Moule S."/>
            <person name="Mungall K."/>
            <person name="Norbertczak H."/>
            <person name="Rabbinowitsch E."/>
            <person name="Walker D."/>
            <person name="Whithead S."/>
            <person name="Thomson N.R."/>
            <person name="Rather P.N."/>
            <person name="Parkhill J."/>
            <person name="Mobley H.L.T."/>
        </authorList>
    </citation>
    <scope>NUCLEOTIDE SEQUENCE [LARGE SCALE GENOMIC DNA]</scope>
    <source>
        <strain>HI4320</strain>
    </source>
</reference>
<gene>
    <name evidence="1" type="primary">hslO</name>
    <name type="ordered locus">PMI3016</name>
</gene>
<feature type="chain" id="PRO_1000095026" description="33 kDa chaperonin">
    <location>
        <begin position="1"/>
        <end position="294"/>
    </location>
</feature>
<feature type="disulfide bond" description="Redox-active" evidence="1">
    <location>
        <begin position="235"/>
        <end position="237"/>
    </location>
</feature>
<feature type="disulfide bond" description="Redox-active" evidence="1">
    <location>
        <begin position="268"/>
        <end position="271"/>
    </location>
</feature>
<evidence type="ECO:0000255" key="1">
    <source>
        <dbReference type="HAMAP-Rule" id="MF_00117"/>
    </source>
</evidence>
<sequence>MSKKDALSRFLFEKSAVRGELVTVTETYQSILENHHYPEPVQHLLGDLLVATSLLTATLKFDGDITVQLQGDGPVRLVVINGNNEQQMRGVARFSDDVKAGSSLKEMMGNGFMVITITPKKGERYQGIVALDGETIEACIDNYFNQSEQLPTRVFIRTGLQDGKAAGAGMLLQALPASAEHSADETAEHFELLTQLTHTIKAQELFTLDTKEILHRLYHEEDVTLYDPQPIAFHCTCSRKRCEDTLVTLSKEDVAHLLQEQGKIDMECEYCGAHYIFTEEDINNINKLSSSNLH</sequence>
<accession>B4F026</accession>
<name>HSLO_PROMH</name>